<dbReference type="EMBL" id="CR382125">
    <property type="protein sequence ID" value="CAG99918.1"/>
    <property type="molecule type" value="Genomic_DNA"/>
</dbReference>
<dbReference type="RefSeq" id="XP_454831.1">
    <property type="nucleotide sequence ID" value="XM_454831.1"/>
</dbReference>
<dbReference type="SMR" id="Q6CMK8"/>
<dbReference type="FunCoup" id="Q6CMK8">
    <property type="interactions" value="29"/>
</dbReference>
<dbReference type="STRING" id="284590.Q6CMK8"/>
<dbReference type="PaxDb" id="284590-Q6CMK8"/>
<dbReference type="KEGG" id="kla:KLLA0_E19449g"/>
<dbReference type="eggNOG" id="KOG2372">
    <property type="taxonomic scope" value="Eukaryota"/>
</dbReference>
<dbReference type="HOGENOM" id="CLU_029204_0_0_1"/>
<dbReference type="InParanoid" id="Q6CMK8"/>
<dbReference type="OMA" id="HYGLWCD"/>
<dbReference type="Proteomes" id="UP000000598">
    <property type="component" value="Chromosome E"/>
</dbReference>
<dbReference type="GO" id="GO:0005739">
    <property type="term" value="C:mitochondrion"/>
    <property type="evidence" value="ECO:0007669"/>
    <property type="project" value="UniProtKB-SubCell"/>
</dbReference>
<dbReference type="GO" id="GO:0005634">
    <property type="term" value="C:nucleus"/>
    <property type="evidence" value="ECO:0007669"/>
    <property type="project" value="TreeGrafter"/>
</dbReference>
<dbReference type="GO" id="GO:0006979">
    <property type="term" value="P:response to oxidative stress"/>
    <property type="evidence" value="ECO:0007669"/>
    <property type="project" value="TreeGrafter"/>
</dbReference>
<dbReference type="InterPro" id="IPR006571">
    <property type="entry name" value="TLDc_dom"/>
</dbReference>
<dbReference type="PANTHER" id="PTHR23354:SF62">
    <property type="entry name" value="MUSTARD, ISOFORM V"/>
    <property type="match status" value="1"/>
</dbReference>
<dbReference type="PANTHER" id="PTHR23354">
    <property type="entry name" value="NUCLEOLAR PROTEIN 7/ESTROGEN RECEPTOR COACTIVATOR-RELATED"/>
    <property type="match status" value="1"/>
</dbReference>
<dbReference type="Pfam" id="PF07534">
    <property type="entry name" value="TLD"/>
    <property type="match status" value="1"/>
</dbReference>
<dbReference type="SMART" id="SM00584">
    <property type="entry name" value="TLDc"/>
    <property type="match status" value="1"/>
</dbReference>
<dbReference type="PROSITE" id="PS51886">
    <property type="entry name" value="TLDC"/>
    <property type="match status" value="1"/>
</dbReference>
<evidence type="ECO:0000250" key="1"/>
<evidence type="ECO:0000255" key="2">
    <source>
        <dbReference type="PROSITE-ProRule" id="PRU01234"/>
    </source>
</evidence>
<evidence type="ECO:0000305" key="3"/>
<organism>
    <name type="scientific">Kluyveromyces lactis (strain ATCC 8585 / CBS 2359 / DSM 70799 / NBRC 1267 / NRRL Y-1140 / WM37)</name>
    <name type="common">Yeast</name>
    <name type="synonym">Candida sphaerica</name>
    <dbReference type="NCBI Taxonomy" id="284590"/>
    <lineage>
        <taxon>Eukaryota</taxon>
        <taxon>Fungi</taxon>
        <taxon>Dikarya</taxon>
        <taxon>Ascomycota</taxon>
        <taxon>Saccharomycotina</taxon>
        <taxon>Saccharomycetes</taxon>
        <taxon>Saccharomycetales</taxon>
        <taxon>Saccharomycetaceae</taxon>
        <taxon>Kluyveromyces</taxon>
    </lineage>
</organism>
<feature type="chain" id="PRO_0000058117" description="Oxidation resistance protein 1">
    <location>
        <begin position="1"/>
        <end position="250"/>
    </location>
</feature>
<feature type="domain" description="TLDc" evidence="2">
    <location>
        <begin position="61"/>
        <end position="250"/>
    </location>
</feature>
<sequence length="250" mass="28723">MSGFRNRIQSWGKGLGTVLSDSIGDESSEKTSRSIQHNHYEEDDALPPVHLIGYSEKTKNRLLSKEMCEELRQLMPTRIQLYTEWTLLYSLEQHGASLHSLYDKLKYDTNNNARVGYVIVIRDRKGGIFGGYANETFHPTDSRRYYGNGECFLWKMEKVPDLQLHDKHDCKQDSHNWQLRGFPYTGENEFSIYCTSTFLSMGAGDGHYGLWIDDGLFRGVTFPSMTFGNDILSREGSKFHIVGVEVWRVG</sequence>
<proteinExistence type="inferred from homology"/>
<accession>Q6CMK8</accession>
<gene>
    <name type="primary">OXR1</name>
    <name type="ordered locus">KLLA0E19547g</name>
</gene>
<reference key="1">
    <citation type="journal article" date="2004" name="Nature">
        <title>Genome evolution in yeasts.</title>
        <authorList>
            <person name="Dujon B."/>
            <person name="Sherman D."/>
            <person name="Fischer G."/>
            <person name="Durrens P."/>
            <person name="Casaregola S."/>
            <person name="Lafontaine I."/>
            <person name="de Montigny J."/>
            <person name="Marck C."/>
            <person name="Neuveglise C."/>
            <person name="Talla E."/>
            <person name="Goffard N."/>
            <person name="Frangeul L."/>
            <person name="Aigle M."/>
            <person name="Anthouard V."/>
            <person name="Babour A."/>
            <person name="Barbe V."/>
            <person name="Barnay S."/>
            <person name="Blanchin S."/>
            <person name="Beckerich J.-M."/>
            <person name="Beyne E."/>
            <person name="Bleykasten C."/>
            <person name="Boisrame A."/>
            <person name="Boyer J."/>
            <person name="Cattolico L."/>
            <person name="Confanioleri F."/>
            <person name="de Daruvar A."/>
            <person name="Despons L."/>
            <person name="Fabre E."/>
            <person name="Fairhead C."/>
            <person name="Ferry-Dumazet H."/>
            <person name="Groppi A."/>
            <person name="Hantraye F."/>
            <person name="Hennequin C."/>
            <person name="Jauniaux N."/>
            <person name="Joyet P."/>
            <person name="Kachouri R."/>
            <person name="Kerrest A."/>
            <person name="Koszul R."/>
            <person name="Lemaire M."/>
            <person name="Lesur I."/>
            <person name="Ma L."/>
            <person name="Muller H."/>
            <person name="Nicaud J.-M."/>
            <person name="Nikolski M."/>
            <person name="Oztas S."/>
            <person name="Ozier-Kalogeropoulos O."/>
            <person name="Pellenz S."/>
            <person name="Potier S."/>
            <person name="Richard G.-F."/>
            <person name="Straub M.-L."/>
            <person name="Suleau A."/>
            <person name="Swennen D."/>
            <person name="Tekaia F."/>
            <person name="Wesolowski-Louvel M."/>
            <person name="Westhof E."/>
            <person name="Wirth B."/>
            <person name="Zeniou-Meyer M."/>
            <person name="Zivanovic Y."/>
            <person name="Bolotin-Fukuhara M."/>
            <person name="Thierry A."/>
            <person name="Bouchier C."/>
            <person name="Caudron B."/>
            <person name="Scarpelli C."/>
            <person name="Gaillardin C."/>
            <person name="Weissenbach J."/>
            <person name="Wincker P."/>
            <person name="Souciet J.-L."/>
        </authorList>
    </citation>
    <scope>NUCLEOTIDE SEQUENCE [LARGE SCALE GENOMIC DNA]</scope>
    <source>
        <strain>ATCC 8585 / CBS 2359 / DSM 70799 / NBRC 1267 / NRRL Y-1140 / WM37</strain>
    </source>
</reference>
<comment type="function">
    <text evidence="1">May be involved in protection from oxidative damage.</text>
</comment>
<comment type="subcellular location">
    <subcellularLocation>
        <location evidence="1">Mitochondrion</location>
    </subcellularLocation>
</comment>
<comment type="similarity">
    <text evidence="3">Belongs to the OXR1 family.</text>
</comment>
<protein>
    <recommendedName>
        <fullName>Oxidation resistance protein 1</fullName>
    </recommendedName>
</protein>
<keyword id="KW-0496">Mitochondrion</keyword>
<keyword id="KW-1185">Reference proteome</keyword>
<name>OXR1_KLULA</name>